<proteinExistence type="inferred from homology"/>
<keyword id="KW-0963">Cytoplasm</keyword>
<keyword id="KW-0342">GTP-binding</keyword>
<keyword id="KW-0396">Initiation factor</keyword>
<keyword id="KW-0547">Nucleotide-binding</keyword>
<keyword id="KW-0648">Protein biosynthesis</keyword>
<dbReference type="EMBL" id="CP000926">
    <property type="protein sequence ID" value="ABZ00599.1"/>
    <property type="molecule type" value="Genomic_DNA"/>
</dbReference>
<dbReference type="RefSeq" id="WP_012274244.1">
    <property type="nucleotide sequence ID" value="NC_010322.1"/>
</dbReference>
<dbReference type="SMR" id="B0KHX8"/>
<dbReference type="KEGG" id="ppg:PputGB1_4712"/>
<dbReference type="eggNOG" id="COG0532">
    <property type="taxonomic scope" value="Bacteria"/>
</dbReference>
<dbReference type="HOGENOM" id="CLU_006301_6_1_6"/>
<dbReference type="Proteomes" id="UP000002157">
    <property type="component" value="Chromosome"/>
</dbReference>
<dbReference type="GO" id="GO:0005829">
    <property type="term" value="C:cytosol"/>
    <property type="evidence" value="ECO:0007669"/>
    <property type="project" value="TreeGrafter"/>
</dbReference>
<dbReference type="GO" id="GO:0005525">
    <property type="term" value="F:GTP binding"/>
    <property type="evidence" value="ECO:0007669"/>
    <property type="project" value="UniProtKB-KW"/>
</dbReference>
<dbReference type="GO" id="GO:0003924">
    <property type="term" value="F:GTPase activity"/>
    <property type="evidence" value="ECO:0007669"/>
    <property type="project" value="UniProtKB-UniRule"/>
</dbReference>
<dbReference type="GO" id="GO:0003743">
    <property type="term" value="F:translation initiation factor activity"/>
    <property type="evidence" value="ECO:0007669"/>
    <property type="project" value="UniProtKB-UniRule"/>
</dbReference>
<dbReference type="CDD" id="cd01887">
    <property type="entry name" value="IF2_eIF5B"/>
    <property type="match status" value="1"/>
</dbReference>
<dbReference type="CDD" id="cd03702">
    <property type="entry name" value="IF2_mtIF2_II"/>
    <property type="match status" value="1"/>
</dbReference>
<dbReference type="CDD" id="cd03692">
    <property type="entry name" value="mtIF2_IVc"/>
    <property type="match status" value="1"/>
</dbReference>
<dbReference type="FunFam" id="2.40.30.10:FF:000007">
    <property type="entry name" value="Translation initiation factor IF-2"/>
    <property type="match status" value="1"/>
</dbReference>
<dbReference type="FunFam" id="2.40.30.10:FF:000008">
    <property type="entry name" value="Translation initiation factor IF-2"/>
    <property type="match status" value="1"/>
</dbReference>
<dbReference type="FunFam" id="3.40.50.10050:FF:000001">
    <property type="entry name" value="Translation initiation factor IF-2"/>
    <property type="match status" value="1"/>
</dbReference>
<dbReference type="FunFam" id="3.40.50.300:FF:000019">
    <property type="entry name" value="Translation initiation factor IF-2"/>
    <property type="match status" value="1"/>
</dbReference>
<dbReference type="Gene3D" id="3.40.50.300">
    <property type="entry name" value="P-loop containing nucleotide triphosphate hydrolases"/>
    <property type="match status" value="1"/>
</dbReference>
<dbReference type="Gene3D" id="3.30.56.50">
    <property type="entry name" value="Putative DNA-binding domain, N-terminal subdomain of bacterial translation initiation factor IF2"/>
    <property type="match status" value="1"/>
</dbReference>
<dbReference type="Gene3D" id="2.40.30.10">
    <property type="entry name" value="Translation factors"/>
    <property type="match status" value="2"/>
</dbReference>
<dbReference type="Gene3D" id="3.40.50.10050">
    <property type="entry name" value="Translation initiation factor IF- 2, domain 3"/>
    <property type="match status" value="1"/>
</dbReference>
<dbReference type="HAMAP" id="MF_00100_B">
    <property type="entry name" value="IF_2_B"/>
    <property type="match status" value="1"/>
</dbReference>
<dbReference type="InterPro" id="IPR009061">
    <property type="entry name" value="DNA-bd_dom_put_sf"/>
</dbReference>
<dbReference type="InterPro" id="IPR053905">
    <property type="entry name" value="EF-G-like_DII"/>
</dbReference>
<dbReference type="InterPro" id="IPR013575">
    <property type="entry name" value="IF2_assoc_dom_bac"/>
</dbReference>
<dbReference type="InterPro" id="IPR044145">
    <property type="entry name" value="IF2_II"/>
</dbReference>
<dbReference type="InterPro" id="IPR006847">
    <property type="entry name" value="IF2_N"/>
</dbReference>
<dbReference type="InterPro" id="IPR027417">
    <property type="entry name" value="P-loop_NTPase"/>
</dbReference>
<dbReference type="InterPro" id="IPR005225">
    <property type="entry name" value="Small_GTP-bd"/>
</dbReference>
<dbReference type="InterPro" id="IPR000795">
    <property type="entry name" value="T_Tr_GTP-bd_dom"/>
</dbReference>
<dbReference type="InterPro" id="IPR000178">
    <property type="entry name" value="TF_IF2_bacterial-like"/>
</dbReference>
<dbReference type="InterPro" id="IPR015760">
    <property type="entry name" value="TIF_IF2"/>
</dbReference>
<dbReference type="InterPro" id="IPR023115">
    <property type="entry name" value="TIF_IF2_dom3"/>
</dbReference>
<dbReference type="InterPro" id="IPR036925">
    <property type="entry name" value="TIF_IF2_dom3_sf"/>
</dbReference>
<dbReference type="InterPro" id="IPR009000">
    <property type="entry name" value="Transl_B-barrel_sf"/>
</dbReference>
<dbReference type="NCBIfam" id="TIGR00487">
    <property type="entry name" value="IF-2"/>
    <property type="match status" value="1"/>
</dbReference>
<dbReference type="NCBIfam" id="TIGR00231">
    <property type="entry name" value="small_GTP"/>
    <property type="match status" value="1"/>
</dbReference>
<dbReference type="PANTHER" id="PTHR43381:SF5">
    <property type="entry name" value="TR-TYPE G DOMAIN-CONTAINING PROTEIN"/>
    <property type="match status" value="1"/>
</dbReference>
<dbReference type="PANTHER" id="PTHR43381">
    <property type="entry name" value="TRANSLATION INITIATION FACTOR IF-2-RELATED"/>
    <property type="match status" value="1"/>
</dbReference>
<dbReference type="Pfam" id="PF22042">
    <property type="entry name" value="EF-G_D2"/>
    <property type="match status" value="1"/>
</dbReference>
<dbReference type="Pfam" id="PF00009">
    <property type="entry name" value="GTP_EFTU"/>
    <property type="match status" value="1"/>
</dbReference>
<dbReference type="Pfam" id="PF11987">
    <property type="entry name" value="IF-2"/>
    <property type="match status" value="1"/>
</dbReference>
<dbReference type="Pfam" id="PF08364">
    <property type="entry name" value="IF2_assoc"/>
    <property type="match status" value="1"/>
</dbReference>
<dbReference type="Pfam" id="PF04760">
    <property type="entry name" value="IF2_N"/>
    <property type="match status" value="2"/>
</dbReference>
<dbReference type="SUPFAM" id="SSF52156">
    <property type="entry name" value="Initiation factor IF2/eIF5b, domain 3"/>
    <property type="match status" value="1"/>
</dbReference>
<dbReference type="SUPFAM" id="SSF52540">
    <property type="entry name" value="P-loop containing nucleoside triphosphate hydrolases"/>
    <property type="match status" value="1"/>
</dbReference>
<dbReference type="SUPFAM" id="SSF46955">
    <property type="entry name" value="Putative DNA-binding domain"/>
    <property type="match status" value="1"/>
</dbReference>
<dbReference type="SUPFAM" id="SSF50447">
    <property type="entry name" value="Translation proteins"/>
    <property type="match status" value="2"/>
</dbReference>
<dbReference type="PROSITE" id="PS51722">
    <property type="entry name" value="G_TR_2"/>
    <property type="match status" value="1"/>
</dbReference>
<dbReference type="PROSITE" id="PS01176">
    <property type="entry name" value="IF2"/>
    <property type="match status" value="1"/>
</dbReference>
<feature type="chain" id="PRO_1000075614" description="Translation initiation factor IF-2">
    <location>
        <begin position="1"/>
        <end position="842"/>
    </location>
</feature>
<feature type="domain" description="tr-type G">
    <location>
        <begin position="342"/>
        <end position="509"/>
    </location>
</feature>
<feature type="region of interest" description="Disordered" evidence="3">
    <location>
        <begin position="94"/>
        <end position="259"/>
    </location>
</feature>
<feature type="region of interest" description="G1" evidence="1">
    <location>
        <begin position="351"/>
        <end position="358"/>
    </location>
</feature>
<feature type="region of interest" description="G2" evidence="1">
    <location>
        <begin position="376"/>
        <end position="380"/>
    </location>
</feature>
<feature type="region of interest" description="G3" evidence="1">
    <location>
        <begin position="397"/>
        <end position="400"/>
    </location>
</feature>
<feature type="region of interest" description="G4" evidence="1">
    <location>
        <begin position="451"/>
        <end position="454"/>
    </location>
</feature>
<feature type="region of interest" description="G5" evidence="1">
    <location>
        <begin position="487"/>
        <end position="489"/>
    </location>
</feature>
<feature type="compositionally biased region" description="Basic and acidic residues" evidence="3">
    <location>
        <begin position="96"/>
        <end position="138"/>
    </location>
</feature>
<feature type="compositionally biased region" description="Low complexity" evidence="3">
    <location>
        <begin position="139"/>
        <end position="148"/>
    </location>
</feature>
<feature type="compositionally biased region" description="Pro residues" evidence="3">
    <location>
        <begin position="149"/>
        <end position="159"/>
    </location>
</feature>
<feature type="compositionally biased region" description="Low complexity" evidence="3">
    <location>
        <begin position="160"/>
        <end position="172"/>
    </location>
</feature>
<feature type="compositionally biased region" description="Basic and acidic residues" evidence="3">
    <location>
        <begin position="173"/>
        <end position="202"/>
    </location>
</feature>
<feature type="compositionally biased region" description="Basic and acidic residues" evidence="3">
    <location>
        <begin position="226"/>
        <end position="235"/>
    </location>
</feature>
<feature type="compositionally biased region" description="Basic residues" evidence="3">
    <location>
        <begin position="236"/>
        <end position="249"/>
    </location>
</feature>
<feature type="binding site" evidence="2">
    <location>
        <begin position="351"/>
        <end position="358"/>
    </location>
    <ligand>
        <name>GTP</name>
        <dbReference type="ChEBI" id="CHEBI:37565"/>
    </ligand>
</feature>
<feature type="binding site" evidence="2">
    <location>
        <begin position="397"/>
        <end position="401"/>
    </location>
    <ligand>
        <name>GTP</name>
        <dbReference type="ChEBI" id="CHEBI:37565"/>
    </ligand>
</feature>
<feature type="binding site" evidence="2">
    <location>
        <begin position="451"/>
        <end position="454"/>
    </location>
    <ligand>
        <name>GTP</name>
        <dbReference type="ChEBI" id="CHEBI:37565"/>
    </ligand>
</feature>
<gene>
    <name evidence="2" type="primary">infB</name>
    <name type="ordered locus">PputGB1_4712</name>
</gene>
<organism>
    <name type="scientific">Pseudomonas putida (strain GB-1)</name>
    <dbReference type="NCBI Taxonomy" id="76869"/>
    <lineage>
        <taxon>Bacteria</taxon>
        <taxon>Pseudomonadati</taxon>
        <taxon>Pseudomonadota</taxon>
        <taxon>Gammaproteobacteria</taxon>
        <taxon>Pseudomonadales</taxon>
        <taxon>Pseudomonadaceae</taxon>
        <taxon>Pseudomonas</taxon>
    </lineage>
</organism>
<accession>B0KHX8</accession>
<evidence type="ECO:0000250" key="1"/>
<evidence type="ECO:0000255" key="2">
    <source>
        <dbReference type="HAMAP-Rule" id="MF_00100"/>
    </source>
</evidence>
<evidence type="ECO:0000256" key="3">
    <source>
        <dbReference type="SAM" id="MobiDB-lite"/>
    </source>
</evidence>
<sequence>MTQVTVKELAQEVEAPVERLLQQMREAGLPHTDAGQVVTDNEKQTLLTHLKSSHKSKAEEPRKITLQRKTTSTLRVAGSKSISVEVRKKKVFVQRSPEEIQAEQKRELDERRAAENAARDKVEAEVRQRNEEQARRQAADSAVAAPAPAAKPEPAPAAAPAPVVADAPASEDAAARAAERKKDETRRNESRTRDDDRRRGEAPRVSIKVKVKEKEKAPTPRAAPRTTDEESDGARRGRGGKGKLKKRNQHGFQNPTGPVIRDVTIGETITVSELANQMSVKGAEVVKFMFKMGTPVTINQVLDQETAQLIAEELGHKVTLVSDTALEDSLAESLKFEGQTESRAPVVTVMGHVDHGKTSLLDYIRRAKVAAGEAGGITQHIGAYHVETDRGMVTFLDTPGHAAFTQMRARGAKATDIVILVVAADDGVMPQTREAVQHAKAAGVPLVVAVNKIDKPGADLDRIRNELSVEGVTSEDWGGDTPFVKVSAKMGTGVDELLEAVLLQAEILELTATPTAPGRGVVVESRLDKGRGPVATILVQDGTLRQGDMVLCGSNYGRVRAMLDENGKPVKEAGPSIPVEILGLDGTPEAGDELSVVADEKKAREVALFRQGKYREVKLARAHAGKLENIFETMGQEEKKTLNIVLKTDVRGSLEALQGSLGGLGNDEVQVRVIGGGVGGITESDANLALASNAVLFGFNVRADAGARKIVEQEGLDMRYYNVIYDIIEDVKKALTGMLGSDVRENILGVAEVRDVFRSPKFGAIAGCMVIEGTVYRNRPIRVLRDDVVIFEGELESLRRFKDDASEVRSGMECGIGVKSYNDVKVGDKIEVFEKVQVARTL</sequence>
<protein>
    <recommendedName>
        <fullName evidence="2">Translation initiation factor IF-2</fullName>
    </recommendedName>
</protein>
<comment type="function">
    <text evidence="2">One of the essential components for the initiation of protein synthesis. Protects formylmethionyl-tRNA from spontaneous hydrolysis and promotes its binding to the 30S ribosomal subunits. Also involved in the hydrolysis of GTP during the formation of the 70S ribosomal complex.</text>
</comment>
<comment type="subcellular location">
    <subcellularLocation>
        <location evidence="2">Cytoplasm</location>
    </subcellularLocation>
</comment>
<comment type="similarity">
    <text evidence="2">Belongs to the TRAFAC class translation factor GTPase superfamily. Classic translation factor GTPase family. IF-2 subfamily.</text>
</comment>
<reference key="1">
    <citation type="submission" date="2008-01" db="EMBL/GenBank/DDBJ databases">
        <title>Complete sequence of Pseudomonas putida GB-1.</title>
        <authorList>
            <consortium name="US DOE Joint Genome Institute"/>
            <person name="Copeland A."/>
            <person name="Lucas S."/>
            <person name="Lapidus A."/>
            <person name="Barry K."/>
            <person name="Glavina del Rio T."/>
            <person name="Dalin E."/>
            <person name="Tice H."/>
            <person name="Pitluck S."/>
            <person name="Bruce D."/>
            <person name="Goodwin L."/>
            <person name="Chertkov O."/>
            <person name="Brettin T."/>
            <person name="Detter J.C."/>
            <person name="Han C."/>
            <person name="Kuske C.R."/>
            <person name="Schmutz J."/>
            <person name="Larimer F."/>
            <person name="Land M."/>
            <person name="Hauser L."/>
            <person name="Kyrpides N."/>
            <person name="Kim E."/>
            <person name="McCarthy J.K."/>
            <person name="Richardson P."/>
        </authorList>
    </citation>
    <scope>NUCLEOTIDE SEQUENCE [LARGE SCALE GENOMIC DNA]</scope>
    <source>
        <strain>GB-1</strain>
    </source>
</reference>
<name>IF2_PSEPG</name>